<accession>C0Q068</accession>
<sequence>MTKVGLRIDVDTLRGTREGVPRLLATLHRHGVQASFFFSVGPDNMGRHLWRLIRPRFLWKMLRSNAASLYGWDILLAGTAWPGKNIGNANAGIIRETATYHETGLHAWDHHAWQTHSGHWSIRQLEEDIARGITALEAIIGKPVTCSAAAGWRADGRVVRAKESFNLRYNSDCRGTTLFRPLLMPGQTGTPQIPVTLPTWDEVIGPAVQAQSFNTWIISRMLQDKGTPVYTIHAEVEGIVHQPLFEDLLVRARDAGITFCPLGELLPASPESLPLGQIVRGHIPGREGWLGCQQAASAS</sequence>
<gene>
    <name evidence="1" type="primary">arnD</name>
    <name type="ordered locus">SPC_1411</name>
</gene>
<protein>
    <recommendedName>
        <fullName evidence="1">Probable 4-deoxy-4-formamido-L-arabinose-phosphoundecaprenol deformylase ArnD</fullName>
        <ecNumber evidence="1">3.5.1.n3</ecNumber>
    </recommendedName>
</protein>
<proteinExistence type="inferred from homology"/>
<name>ARND_SALPC</name>
<reference key="1">
    <citation type="journal article" date="2009" name="PLoS ONE">
        <title>Salmonella paratyphi C: genetic divergence from Salmonella choleraesuis and pathogenic convergence with Salmonella typhi.</title>
        <authorList>
            <person name="Liu W.-Q."/>
            <person name="Feng Y."/>
            <person name="Wang Y."/>
            <person name="Zou Q.-H."/>
            <person name="Chen F."/>
            <person name="Guo J.-T."/>
            <person name="Peng Y.-H."/>
            <person name="Jin Y."/>
            <person name="Li Y.-G."/>
            <person name="Hu S.-N."/>
            <person name="Johnston R.N."/>
            <person name="Liu G.-R."/>
            <person name="Liu S.-L."/>
        </authorList>
    </citation>
    <scope>NUCLEOTIDE SEQUENCE [LARGE SCALE GENOMIC DNA]</scope>
    <source>
        <strain>RKS4594</strain>
    </source>
</reference>
<dbReference type="EC" id="3.5.1.n3" evidence="1"/>
<dbReference type="EMBL" id="CP000857">
    <property type="protein sequence ID" value="ACN45572.1"/>
    <property type="molecule type" value="Genomic_DNA"/>
</dbReference>
<dbReference type="RefSeq" id="WP_000169768.1">
    <property type="nucleotide sequence ID" value="NC_012125.1"/>
</dbReference>
<dbReference type="SMR" id="C0Q068"/>
<dbReference type="KEGG" id="sei:SPC_1411"/>
<dbReference type="HOGENOM" id="CLU_084199_0_0_6"/>
<dbReference type="UniPathway" id="UPA00030"/>
<dbReference type="UniPathway" id="UPA00036">
    <property type="reaction ID" value="UER00496"/>
</dbReference>
<dbReference type="Proteomes" id="UP000001599">
    <property type="component" value="Chromosome"/>
</dbReference>
<dbReference type="GO" id="GO:0016020">
    <property type="term" value="C:membrane"/>
    <property type="evidence" value="ECO:0007669"/>
    <property type="project" value="GOC"/>
</dbReference>
<dbReference type="GO" id="GO:0016811">
    <property type="term" value="F:hydrolase activity, acting on carbon-nitrogen (but not peptide) bonds, in linear amides"/>
    <property type="evidence" value="ECO:0007669"/>
    <property type="project" value="UniProtKB-UniRule"/>
</dbReference>
<dbReference type="GO" id="GO:0036108">
    <property type="term" value="P:4-amino-4-deoxy-alpha-L-arabinopyranosyl undecaprenyl phosphate biosynthetic process"/>
    <property type="evidence" value="ECO:0007669"/>
    <property type="project" value="UniProtKB-UniRule"/>
</dbReference>
<dbReference type="GO" id="GO:0009245">
    <property type="term" value="P:lipid A biosynthetic process"/>
    <property type="evidence" value="ECO:0007669"/>
    <property type="project" value="UniProtKB-UniRule"/>
</dbReference>
<dbReference type="GO" id="GO:0009103">
    <property type="term" value="P:lipopolysaccharide biosynthetic process"/>
    <property type="evidence" value="ECO:0007669"/>
    <property type="project" value="UniProtKB-UniRule"/>
</dbReference>
<dbReference type="GO" id="GO:0046677">
    <property type="term" value="P:response to antibiotic"/>
    <property type="evidence" value="ECO:0007669"/>
    <property type="project" value="UniProtKB-KW"/>
</dbReference>
<dbReference type="Gene3D" id="3.20.20.370">
    <property type="entry name" value="Glycoside hydrolase/deacetylase"/>
    <property type="match status" value="1"/>
</dbReference>
<dbReference type="HAMAP" id="MF_01870">
    <property type="entry name" value="ArnD"/>
    <property type="match status" value="1"/>
</dbReference>
<dbReference type="InterPro" id="IPR023557">
    <property type="entry name" value="ArnD"/>
</dbReference>
<dbReference type="InterPro" id="IPR011330">
    <property type="entry name" value="Glyco_hydro/deAcase_b/a-brl"/>
</dbReference>
<dbReference type="InterPro" id="IPR002509">
    <property type="entry name" value="NODB_dom"/>
</dbReference>
<dbReference type="InterPro" id="IPR050248">
    <property type="entry name" value="Polysacc_deacetylase_ArnD"/>
</dbReference>
<dbReference type="NCBIfam" id="NF011923">
    <property type="entry name" value="PRK15394.1"/>
    <property type="match status" value="1"/>
</dbReference>
<dbReference type="PANTHER" id="PTHR10587:SF137">
    <property type="entry name" value="4-DEOXY-4-FORMAMIDO-L-ARABINOSE-PHOSPHOUNDECAPRENOL DEFORMYLASE ARND-RELATED"/>
    <property type="match status" value="1"/>
</dbReference>
<dbReference type="PANTHER" id="PTHR10587">
    <property type="entry name" value="GLYCOSYL TRANSFERASE-RELATED"/>
    <property type="match status" value="1"/>
</dbReference>
<dbReference type="Pfam" id="PF01522">
    <property type="entry name" value="Polysacc_deac_1"/>
    <property type="match status" value="1"/>
</dbReference>
<dbReference type="SUPFAM" id="SSF88713">
    <property type="entry name" value="Glycoside hydrolase/deacetylase"/>
    <property type="match status" value="1"/>
</dbReference>
<dbReference type="PROSITE" id="PS51677">
    <property type="entry name" value="NODB"/>
    <property type="match status" value="1"/>
</dbReference>
<evidence type="ECO:0000255" key="1">
    <source>
        <dbReference type="HAMAP-Rule" id="MF_01870"/>
    </source>
</evidence>
<feature type="chain" id="PRO_0000383537" description="Probable 4-deoxy-4-formamido-L-arabinose-phosphoundecaprenol deformylase ArnD">
    <location>
        <begin position="1"/>
        <end position="299"/>
    </location>
</feature>
<feature type="domain" description="NodB homology" evidence="1">
    <location>
        <begin position="2"/>
        <end position="260"/>
    </location>
</feature>
<organism>
    <name type="scientific">Salmonella paratyphi C (strain RKS4594)</name>
    <dbReference type="NCBI Taxonomy" id="476213"/>
    <lineage>
        <taxon>Bacteria</taxon>
        <taxon>Pseudomonadati</taxon>
        <taxon>Pseudomonadota</taxon>
        <taxon>Gammaproteobacteria</taxon>
        <taxon>Enterobacterales</taxon>
        <taxon>Enterobacteriaceae</taxon>
        <taxon>Salmonella</taxon>
    </lineage>
</organism>
<comment type="function">
    <text evidence="1">Catalyzes the deformylation of 4-deoxy-4-formamido-L-arabinose-phosphoundecaprenol to 4-amino-4-deoxy-L-arabinose-phosphoundecaprenol. The modified arabinose is attached to lipid A and is required for resistance to polymyxin and cationic antimicrobial peptides.</text>
</comment>
<comment type="catalytic activity">
    <reaction evidence="1">
        <text>4-deoxy-4-formamido-alpha-L-arabinopyranosyl di-trans,octa-cis-undecaprenyl phosphate + H2O = 4-amino-4-deoxy-alpha-L-arabinopyranosyl di-trans,octa-cis-undecaprenyl phosphate + formate</text>
        <dbReference type="Rhea" id="RHEA:27734"/>
        <dbReference type="ChEBI" id="CHEBI:15377"/>
        <dbReference type="ChEBI" id="CHEBI:15740"/>
        <dbReference type="ChEBI" id="CHEBI:58909"/>
        <dbReference type="ChEBI" id="CHEBI:60463"/>
        <dbReference type="EC" id="3.5.1.n3"/>
    </reaction>
</comment>
<comment type="pathway">
    <text evidence="1">Glycolipid biosynthesis; 4-amino-4-deoxy-alpha-L-arabinose undecaprenyl phosphate biosynthesis; 4-amino-4-deoxy-alpha-L-arabinose undecaprenyl phosphate from UDP-4-deoxy-4-formamido-beta-L-arabinose and undecaprenyl phosphate: step 2/2.</text>
</comment>
<comment type="pathway">
    <text evidence="1">Bacterial outer membrane biogenesis; lipopolysaccharide biosynthesis.</text>
</comment>
<comment type="similarity">
    <text evidence="1">Belongs to the polysaccharide deacetylase family. ArnD deformylase subfamily.</text>
</comment>
<keyword id="KW-0046">Antibiotic resistance</keyword>
<keyword id="KW-0378">Hydrolase</keyword>
<keyword id="KW-0441">Lipid A biosynthesis</keyword>
<keyword id="KW-0444">Lipid biosynthesis</keyword>
<keyword id="KW-0443">Lipid metabolism</keyword>
<keyword id="KW-0448">Lipopolysaccharide biosynthesis</keyword>